<comment type="function">
    <text evidence="1">Catalyzes the dephosphorylation of undecaprenyl diphosphate (UPP). Confers resistance to bacitracin.</text>
</comment>
<comment type="catalytic activity">
    <reaction evidence="1">
        <text>di-trans,octa-cis-undecaprenyl diphosphate + H2O = di-trans,octa-cis-undecaprenyl phosphate + phosphate + H(+)</text>
        <dbReference type="Rhea" id="RHEA:28094"/>
        <dbReference type="ChEBI" id="CHEBI:15377"/>
        <dbReference type="ChEBI" id="CHEBI:15378"/>
        <dbReference type="ChEBI" id="CHEBI:43474"/>
        <dbReference type="ChEBI" id="CHEBI:58405"/>
        <dbReference type="ChEBI" id="CHEBI:60392"/>
        <dbReference type="EC" id="3.6.1.27"/>
    </reaction>
</comment>
<comment type="subcellular location">
    <subcellularLocation>
        <location evidence="1">Cell inner membrane</location>
        <topology evidence="1">Multi-pass membrane protein</topology>
    </subcellularLocation>
</comment>
<comment type="miscellaneous">
    <text>Bacitracin is thought to be involved in the inhibition of peptidoglycan synthesis by sequestering undecaprenyl diphosphate, thereby reducing the pool of lipid carrier available.</text>
</comment>
<comment type="similarity">
    <text evidence="1">Belongs to the UppP family.</text>
</comment>
<evidence type="ECO:0000255" key="1">
    <source>
        <dbReference type="HAMAP-Rule" id="MF_01006"/>
    </source>
</evidence>
<accession>Q87SL0</accession>
<keyword id="KW-0046">Antibiotic resistance</keyword>
<keyword id="KW-0997">Cell inner membrane</keyword>
<keyword id="KW-1003">Cell membrane</keyword>
<keyword id="KW-0133">Cell shape</keyword>
<keyword id="KW-0961">Cell wall biogenesis/degradation</keyword>
<keyword id="KW-0378">Hydrolase</keyword>
<keyword id="KW-0472">Membrane</keyword>
<keyword id="KW-0573">Peptidoglycan synthesis</keyword>
<keyword id="KW-0812">Transmembrane</keyword>
<keyword id="KW-1133">Transmembrane helix</keyword>
<name>UPPP_VIBPA</name>
<dbReference type="EC" id="3.6.1.27" evidence="1"/>
<dbReference type="EMBL" id="BA000031">
    <property type="protein sequence ID" value="BAC58676.1"/>
    <property type="molecule type" value="Genomic_DNA"/>
</dbReference>
<dbReference type="RefSeq" id="NP_796792.1">
    <property type="nucleotide sequence ID" value="NC_004603.1"/>
</dbReference>
<dbReference type="RefSeq" id="WP_005479178.1">
    <property type="nucleotide sequence ID" value="NC_004603.1"/>
</dbReference>
<dbReference type="SMR" id="Q87SL0"/>
<dbReference type="GeneID" id="1187881"/>
<dbReference type="KEGG" id="vpa:VP0413"/>
<dbReference type="PATRIC" id="fig|223926.6.peg.392"/>
<dbReference type="eggNOG" id="COG1968">
    <property type="taxonomic scope" value="Bacteria"/>
</dbReference>
<dbReference type="HOGENOM" id="CLU_060296_1_0_6"/>
<dbReference type="Proteomes" id="UP000002493">
    <property type="component" value="Chromosome 1"/>
</dbReference>
<dbReference type="GO" id="GO:0005886">
    <property type="term" value="C:plasma membrane"/>
    <property type="evidence" value="ECO:0007669"/>
    <property type="project" value="UniProtKB-SubCell"/>
</dbReference>
<dbReference type="GO" id="GO:0050380">
    <property type="term" value="F:undecaprenyl-diphosphatase activity"/>
    <property type="evidence" value="ECO:0007669"/>
    <property type="project" value="UniProtKB-UniRule"/>
</dbReference>
<dbReference type="GO" id="GO:0071555">
    <property type="term" value="P:cell wall organization"/>
    <property type="evidence" value="ECO:0007669"/>
    <property type="project" value="UniProtKB-KW"/>
</dbReference>
<dbReference type="GO" id="GO:0009252">
    <property type="term" value="P:peptidoglycan biosynthetic process"/>
    <property type="evidence" value="ECO:0007669"/>
    <property type="project" value="UniProtKB-KW"/>
</dbReference>
<dbReference type="GO" id="GO:0008360">
    <property type="term" value="P:regulation of cell shape"/>
    <property type="evidence" value="ECO:0007669"/>
    <property type="project" value="UniProtKB-KW"/>
</dbReference>
<dbReference type="GO" id="GO:0046677">
    <property type="term" value="P:response to antibiotic"/>
    <property type="evidence" value="ECO:0007669"/>
    <property type="project" value="UniProtKB-UniRule"/>
</dbReference>
<dbReference type="HAMAP" id="MF_01006">
    <property type="entry name" value="Undec_diphosphatase"/>
    <property type="match status" value="1"/>
</dbReference>
<dbReference type="InterPro" id="IPR003824">
    <property type="entry name" value="UppP"/>
</dbReference>
<dbReference type="NCBIfam" id="NF001393">
    <property type="entry name" value="PRK00281.2-4"/>
    <property type="match status" value="1"/>
</dbReference>
<dbReference type="NCBIfam" id="TIGR00753">
    <property type="entry name" value="undec_PP_bacA"/>
    <property type="match status" value="1"/>
</dbReference>
<dbReference type="PANTHER" id="PTHR30622">
    <property type="entry name" value="UNDECAPRENYL-DIPHOSPHATASE"/>
    <property type="match status" value="1"/>
</dbReference>
<dbReference type="PANTHER" id="PTHR30622:SF4">
    <property type="entry name" value="UNDECAPRENYL-DIPHOSPHATASE"/>
    <property type="match status" value="1"/>
</dbReference>
<dbReference type="Pfam" id="PF02673">
    <property type="entry name" value="BacA"/>
    <property type="match status" value="1"/>
</dbReference>
<sequence>MSYFEAFILALIQGLTEFLPISSSAHLILPSAIFGWADQGLAFDVAVHVGTLMAVVIYFRHEVITLFRALFASIFKGDRSKEAKLAWMIVIATIPACVFGLLMKDVIEVYLRSAYVIATTTIVFGLLLWWVDKNAKLVADEYQTGWKKAVFIGIAQALAMIPGTSRSGATITAALYLGFTREAAARFSFLMSIPIITLAGSYLGMKLVTSGEPVHVGFLLTGILTSFISAYICIHFFLKMISRMGMTPFVIYRLILGVGLFAFLLSA</sequence>
<protein>
    <recommendedName>
        <fullName evidence="1">Undecaprenyl-diphosphatase</fullName>
        <ecNumber evidence="1">3.6.1.27</ecNumber>
    </recommendedName>
    <alternativeName>
        <fullName evidence="1">Bacitracin resistance protein</fullName>
    </alternativeName>
    <alternativeName>
        <fullName evidence="1">Undecaprenyl pyrophosphate phosphatase</fullName>
    </alternativeName>
</protein>
<feature type="chain" id="PRO_0000151236" description="Undecaprenyl-diphosphatase">
    <location>
        <begin position="1"/>
        <end position="267"/>
    </location>
</feature>
<feature type="transmembrane region" description="Helical" evidence="1">
    <location>
        <begin position="1"/>
        <end position="21"/>
    </location>
</feature>
<feature type="transmembrane region" description="Helical" evidence="1">
    <location>
        <begin position="39"/>
        <end position="59"/>
    </location>
</feature>
<feature type="transmembrane region" description="Helical" evidence="1">
    <location>
        <begin position="83"/>
        <end position="103"/>
    </location>
</feature>
<feature type="transmembrane region" description="Helical" evidence="1">
    <location>
        <begin position="111"/>
        <end position="131"/>
    </location>
</feature>
<feature type="transmembrane region" description="Helical" evidence="1">
    <location>
        <begin position="144"/>
        <end position="164"/>
    </location>
</feature>
<feature type="transmembrane region" description="Helical" evidence="1">
    <location>
        <begin position="189"/>
        <end position="209"/>
    </location>
</feature>
<feature type="transmembrane region" description="Helical" evidence="1">
    <location>
        <begin position="218"/>
        <end position="238"/>
    </location>
</feature>
<feature type="transmembrane region" description="Helical" evidence="1">
    <location>
        <begin position="245"/>
        <end position="265"/>
    </location>
</feature>
<proteinExistence type="inferred from homology"/>
<organism>
    <name type="scientific">Vibrio parahaemolyticus serotype O3:K6 (strain RIMD 2210633)</name>
    <dbReference type="NCBI Taxonomy" id="223926"/>
    <lineage>
        <taxon>Bacteria</taxon>
        <taxon>Pseudomonadati</taxon>
        <taxon>Pseudomonadota</taxon>
        <taxon>Gammaproteobacteria</taxon>
        <taxon>Vibrionales</taxon>
        <taxon>Vibrionaceae</taxon>
        <taxon>Vibrio</taxon>
    </lineage>
</organism>
<gene>
    <name evidence="1" type="primary">uppP</name>
    <name type="synonym">bacA</name>
    <name type="synonym">upk</name>
    <name type="ordered locus">VP0413</name>
</gene>
<reference key="1">
    <citation type="journal article" date="2003" name="Lancet">
        <title>Genome sequence of Vibrio parahaemolyticus: a pathogenic mechanism distinct from that of V. cholerae.</title>
        <authorList>
            <person name="Makino K."/>
            <person name="Oshima K."/>
            <person name="Kurokawa K."/>
            <person name="Yokoyama K."/>
            <person name="Uda T."/>
            <person name="Tagomori K."/>
            <person name="Iijima Y."/>
            <person name="Najima M."/>
            <person name="Nakano M."/>
            <person name="Yamashita A."/>
            <person name="Kubota Y."/>
            <person name="Kimura S."/>
            <person name="Yasunaga T."/>
            <person name="Honda T."/>
            <person name="Shinagawa H."/>
            <person name="Hattori M."/>
            <person name="Iida T."/>
        </authorList>
    </citation>
    <scope>NUCLEOTIDE SEQUENCE [LARGE SCALE GENOMIC DNA]</scope>
    <source>
        <strain>RIMD 2210633</strain>
    </source>
</reference>